<dbReference type="EC" id="1.1.1.27" evidence="1"/>
<dbReference type="EMBL" id="X67286">
    <property type="protein sequence ID" value="CAA47702.1"/>
    <property type="molecule type" value="Genomic_DNA"/>
</dbReference>
<dbReference type="EMBL" id="AE017243">
    <property type="protein sequence ID" value="AAZ44224.1"/>
    <property type="molecule type" value="Genomic_DNA"/>
</dbReference>
<dbReference type="PIR" id="S33362">
    <property type="entry name" value="S33362"/>
</dbReference>
<dbReference type="RefSeq" id="WP_011283934.1">
    <property type="nucleotide sequence ID" value="NC_007295.1"/>
</dbReference>
<dbReference type="SMR" id="P0C0J3"/>
<dbReference type="GeneID" id="41334434"/>
<dbReference type="KEGG" id="mhj:MHJ_0133"/>
<dbReference type="eggNOG" id="COG0039">
    <property type="taxonomic scope" value="Bacteria"/>
</dbReference>
<dbReference type="HOGENOM" id="CLU_045401_1_2_14"/>
<dbReference type="OrthoDB" id="9802969at2"/>
<dbReference type="UniPathway" id="UPA00554">
    <property type="reaction ID" value="UER00611"/>
</dbReference>
<dbReference type="Proteomes" id="UP000000548">
    <property type="component" value="Chromosome"/>
</dbReference>
<dbReference type="GO" id="GO:0005737">
    <property type="term" value="C:cytoplasm"/>
    <property type="evidence" value="ECO:0007669"/>
    <property type="project" value="UniProtKB-SubCell"/>
</dbReference>
<dbReference type="GO" id="GO:0004459">
    <property type="term" value="F:L-lactate dehydrogenase activity"/>
    <property type="evidence" value="ECO:0007669"/>
    <property type="project" value="UniProtKB-UniRule"/>
</dbReference>
<dbReference type="GO" id="GO:0006096">
    <property type="term" value="P:glycolytic process"/>
    <property type="evidence" value="ECO:0007669"/>
    <property type="project" value="UniProtKB-UniRule"/>
</dbReference>
<dbReference type="GO" id="GO:0006089">
    <property type="term" value="P:lactate metabolic process"/>
    <property type="evidence" value="ECO:0007669"/>
    <property type="project" value="TreeGrafter"/>
</dbReference>
<dbReference type="CDD" id="cd05291">
    <property type="entry name" value="HicDH_like"/>
    <property type="match status" value="1"/>
</dbReference>
<dbReference type="Gene3D" id="3.90.110.10">
    <property type="entry name" value="Lactate dehydrogenase/glycoside hydrolase, family 4, C-terminal"/>
    <property type="match status" value="1"/>
</dbReference>
<dbReference type="Gene3D" id="3.40.50.720">
    <property type="entry name" value="NAD(P)-binding Rossmann-like Domain"/>
    <property type="match status" value="1"/>
</dbReference>
<dbReference type="HAMAP" id="MF_00488">
    <property type="entry name" value="Lactate_dehydrog"/>
    <property type="match status" value="1"/>
</dbReference>
<dbReference type="InterPro" id="IPR001557">
    <property type="entry name" value="L-lactate/malate_DH"/>
</dbReference>
<dbReference type="InterPro" id="IPR011304">
    <property type="entry name" value="L-lactate_DH"/>
</dbReference>
<dbReference type="InterPro" id="IPR018177">
    <property type="entry name" value="L-lactate_DH_AS"/>
</dbReference>
<dbReference type="InterPro" id="IPR022383">
    <property type="entry name" value="Lactate/malate_DH_C"/>
</dbReference>
<dbReference type="InterPro" id="IPR001236">
    <property type="entry name" value="Lactate/malate_DH_N"/>
</dbReference>
<dbReference type="InterPro" id="IPR015955">
    <property type="entry name" value="Lactate_DH/Glyco_Ohase_4_C"/>
</dbReference>
<dbReference type="InterPro" id="IPR036291">
    <property type="entry name" value="NAD(P)-bd_dom_sf"/>
</dbReference>
<dbReference type="NCBIfam" id="TIGR01771">
    <property type="entry name" value="L-LDH-NAD"/>
    <property type="match status" value="1"/>
</dbReference>
<dbReference type="PANTHER" id="PTHR43128">
    <property type="entry name" value="L-2-HYDROXYCARBOXYLATE DEHYDROGENASE (NAD(P)(+))"/>
    <property type="match status" value="1"/>
</dbReference>
<dbReference type="PANTHER" id="PTHR43128:SF16">
    <property type="entry name" value="L-LACTATE DEHYDROGENASE"/>
    <property type="match status" value="1"/>
</dbReference>
<dbReference type="Pfam" id="PF02866">
    <property type="entry name" value="Ldh_1_C"/>
    <property type="match status" value="1"/>
</dbReference>
<dbReference type="Pfam" id="PF00056">
    <property type="entry name" value="Ldh_1_N"/>
    <property type="match status" value="1"/>
</dbReference>
<dbReference type="PIRSF" id="PIRSF000102">
    <property type="entry name" value="Lac_mal_DH"/>
    <property type="match status" value="1"/>
</dbReference>
<dbReference type="PRINTS" id="PR00086">
    <property type="entry name" value="LLDHDRGNASE"/>
</dbReference>
<dbReference type="SUPFAM" id="SSF56327">
    <property type="entry name" value="LDH C-terminal domain-like"/>
    <property type="match status" value="1"/>
</dbReference>
<dbReference type="SUPFAM" id="SSF51735">
    <property type="entry name" value="NAD(P)-binding Rossmann-fold domains"/>
    <property type="match status" value="1"/>
</dbReference>
<dbReference type="PROSITE" id="PS00064">
    <property type="entry name" value="L_LDH"/>
    <property type="match status" value="1"/>
</dbReference>
<proteinExistence type="evidence at protein level"/>
<evidence type="ECO:0000255" key="1">
    <source>
        <dbReference type="HAMAP-Rule" id="MF_00488"/>
    </source>
</evidence>
<evidence type="ECO:0000305" key="2"/>
<accession>P0C0J3</accession>
<accession>P33572</accession>
<accession>Q4AAJ7</accession>
<accession>Q601F7</accession>
<organism>
    <name type="scientific">Mesomycoplasma hyopneumoniae (strain J / ATCC 25934 / NCTC 10110)</name>
    <name type="common">Mycoplasma hyopneumoniae</name>
    <dbReference type="NCBI Taxonomy" id="262719"/>
    <lineage>
        <taxon>Bacteria</taxon>
        <taxon>Bacillati</taxon>
        <taxon>Mycoplasmatota</taxon>
        <taxon>Mycoplasmoidales</taxon>
        <taxon>Metamycoplasmataceae</taxon>
        <taxon>Mesomycoplasma</taxon>
    </lineage>
</organism>
<gene>
    <name evidence="1" type="primary">ldh</name>
    <name type="synonym">ictD</name>
    <name type="ordered locus">MHJ_0133</name>
</gene>
<feature type="chain" id="PRO_0000168371" description="L-lactate dehydrogenase">
    <location>
        <begin position="1"/>
        <end position="315"/>
    </location>
</feature>
<feature type="active site" description="Proton acceptor" evidence="1">
    <location>
        <position position="176"/>
    </location>
</feature>
<feature type="binding site" evidence="1">
    <location>
        <position position="14"/>
    </location>
    <ligand>
        <name>NAD(+)</name>
        <dbReference type="ChEBI" id="CHEBI:57540"/>
    </ligand>
</feature>
<feature type="binding site" evidence="1">
    <location>
        <position position="35"/>
    </location>
    <ligand>
        <name>NAD(+)</name>
        <dbReference type="ChEBI" id="CHEBI:57540"/>
    </ligand>
</feature>
<feature type="binding site" evidence="1">
    <location>
        <position position="66"/>
    </location>
    <ligand>
        <name>NAD(+)</name>
        <dbReference type="ChEBI" id="CHEBI:57540"/>
    </ligand>
</feature>
<feature type="binding site" evidence="1">
    <location>
        <position position="83"/>
    </location>
    <ligand>
        <name>substrate</name>
    </ligand>
</feature>
<feature type="binding site" evidence="1">
    <location>
        <position position="89"/>
    </location>
    <ligand>
        <name>substrate</name>
    </ligand>
</feature>
<feature type="binding site" evidence="1">
    <location>
        <begin position="119"/>
        <end position="121"/>
    </location>
    <ligand>
        <name>NAD(+)</name>
        <dbReference type="ChEBI" id="CHEBI:57540"/>
    </ligand>
</feature>
<feature type="binding site" evidence="1">
    <location>
        <begin position="121"/>
        <end position="124"/>
    </location>
    <ligand>
        <name>substrate</name>
    </ligand>
</feature>
<feature type="binding site" evidence="1">
    <location>
        <position position="144"/>
    </location>
    <ligand>
        <name>NAD(+)</name>
        <dbReference type="ChEBI" id="CHEBI:57540"/>
    </ligand>
</feature>
<feature type="binding site" evidence="1">
    <location>
        <begin position="149"/>
        <end position="152"/>
    </location>
    <ligand>
        <name>substrate</name>
    </ligand>
</feature>
<feature type="binding site" evidence="1">
    <location>
        <position position="230"/>
    </location>
    <ligand>
        <name>substrate</name>
    </ligand>
</feature>
<feature type="modified residue" description="Phosphotyrosine" evidence="1">
    <location>
        <position position="221"/>
    </location>
</feature>
<name>LDH_MESHJ</name>
<sequence>MKPIKIALIGAGNVGNSFLYAAMNQGLASEYGIIDINPDFADGNAFDFEDASASLPFPISVSRYEYKDLKDADFIVITAGRPQKPGETRLELVADNIRIIREIALKVKESGFSGISIIVANPVDIITRAYRDASGFSDQKVIGSGTVLDTARLQFAIAKRAKVSPNSVQAYVMGEHGDSSFVAYSNIKIAGECFCAYSKLTGIDSSNYEKELEYPVSRRAYEIINRKRATFYGIGAAIAKIVSNIIKDTKNIMIAGANLRGEYGFHGVNIGVPVVLGANGIEKIIEISLNDKEKEKFAKSVAIIDKIYQDAIKNI</sequence>
<keyword id="KW-0963">Cytoplasm</keyword>
<keyword id="KW-0903">Direct protein sequencing</keyword>
<keyword id="KW-0520">NAD</keyword>
<keyword id="KW-0560">Oxidoreductase</keyword>
<keyword id="KW-0597">Phosphoprotein</keyword>
<comment type="function">
    <text evidence="1">Catalyzes the conversion of lactate to pyruvate.</text>
</comment>
<comment type="catalytic activity">
    <reaction evidence="1">
        <text>(S)-lactate + NAD(+) = pyruvate + NADH + H(+)</text>
        <dbReference type="Rhea" id="RHEA:23444"/>
        <dbReference type="ChEBI" id="CHEBI:15361"/>
        <dbReference type="ChEBI" id="CHEBI:15378"/>
        <dbReference type="ChEBI" id="CHEBI:16651"/>
        <dbReference type="ChEBI" id="CHEBI:57540"/>
        <dbReference type="ChEBI" id="CHEBI:57945"/>
        <dbReference type="EC" id="1.1.1.27"/>
    </reaction>
</comment>
<comment type="pathway">
    <text evidence="1">Fermentation; pyruvate fermentation to lactate; (S)-lactate from pyruvate: step 1/1.</text>
</comment>
<comment type="subunit">
    <text evidence="1">Homotetramer.</text>
</comment>
<comment type="subcellular location">
    <subcellularLocation>
        <location evidence="1">Cytoplasm</location>
    </subcellularLocation>
</comment>
<comment type="similarity">
    <text evidence="1 2">Belongs to the LDH/MDH superfamily. LDH family.</text>
</comment>
<protein>
    <recommendedName>
        <fullName evidence="1">L-lactate dehydrogenase</fullName>
        <shortName evidence="1">L-LDH</shortName>
        <ecNumber evidence="1">1.1.1.27</ecNumber>
    </recommendedName>
    <alternativeName>
        <fullName>Immunogenic protein p36</fullName>
    </alternativeName>
</protein>
<reference key="1">
    <citation type="journal article" date="1993" name="J. Gen. Microbiol.">
        <title>DNA sequence determination and biochemical analysis of the immunogenic protein P36, the lactate dehydrogenase (LDH) of Mycoplasma hyopneumoniae.</title>
        <authorList>
            <person name="Haldimann A."/>
            <person name="Nicolet J."/>
            <person name="Frey J."/>
        </authorList>
    </citation>
    <scope>NUCLEOTIDE SEQUENCE [GENOMIC DNA]</scope>
    <scope>PROTEIN SEQUENCE OF 1-12</scope>
</reference>
<reference key="2">
    <citation type="journal article" date="2005" name="J. Bacteriol.">
        <title>Swine and poultry pathogens: the complete genome sequences of two strains of Mycoplasma hyopneumoniae and a strain of Mycoplasma synoviae.</title>
        <authorList>
            <person name="Vasconcelos A.T.R."/>
            <person name="Ferreira H.B."/>
            <person name="Bizarro C.V."/>
            <person name="Bonatto S.L."/>
            <person name="Carvalho M.O."/>
            <person name="Pinto P.M."/>
            <person name="Almeida D.F."/>
            <person name="Almeida L.G.P."/>
            <person name="Almeida R."/>
            <person name="Alves-Junior L."/>
            <person name="Assuncao E.N."/>
            <person name="Azevedo V.A.C."/>
            <person name="Bogo M.R."/>
            <person name="Brigido M.M."/>
            <person name="Brocchi M."/>
            <person name="Burity H.A."/>
            <person name="Camargo A.A."/>
            <person name="Camargo S.S."/>
            <person name="Carepo M.S."/>
            <person name="Carraro D.M."/>
            <person name="de Mattos Cascardo J.C."/>
            <person name="Castro L.A."/>
            <person name="Cavalcanti G."/>
            <person name="Chemale G."/>
            <person name="Collevatti R.G."/>
            <person name="Cunha C.W."/>
            <person name="Dallagiovanna B."/>
            <person name="Dambros B.P."/>
            <person name="Dellagostin O.A."/>
            <person name="Falcao C."/>
            <person name="Fantinatti-Garboggini F."/>
            <person name="Felipe M.S.S."/>
            <person name="Fiorentin L."/>
            <person name="Franco G.R."/>
            <person name="Freitas N.S.A."/>
            <person name="Frias D."/>
            <person name="Grangeiro T.B."/>
            <person name="Grisard E.C."/>
            <person name="Guimaraes C.T."/>
            <person name="Hungria M."/>
            <person name="Jardim S.N."/>
            <person name="Krieger M.A."/>
            <person name="Laurino J.P."/>
            <person name="Lima L.F.A."/>
            <person name="Lopes M.I."/>
            <person name="Loreto E.L.S."/>
            <person name="Madeira H.M.F."/>
            <person name="Manfio G.P."/>
            <person name="Maranhao A.Q."/>
            <person name="Martinkovics C.T."/>
            <person name="Medeiros S.R.B."/>
            <person name="Moreira M.A.M."/>
            <person name="Neiva M."/>
            <person name="Ramalho-Neto C.E."/>
            <person name="Nicolas M.F."/>
            <person name="Oliveira S.C."/>
            <person name="Paixao R.F.C."/>
            <person name="Pedrosa F.O."/>
            <person name="Pena S.D.J."/>
            <person name="Pereira M."/>
            <person name="Pereira-Ferrari L."/>
            <person name="Piffer I."/>
            <person name="Pinto L.S."/>
            <person name="Potrich D.P."/>
            <person name="Salim A.C.M."/>
            <person name="Santos F.R."/>
            <person name="Schmitt R."/>
            <person name="Schneider M.P.C."/>
            <person name="Schrank A."/>
            <person name="Schrank I.S."/>
            <person name="Schuck A.F."/>
            <person name="Seuanez H.N."/>
            <person name="Silva D.W."/>
            <person name="Silva R."/>
            <person name="Silva S.C."/>
            <person name="Soares C.M.A."/>
            <person name="Souza K.R.L."/>
            <person name="Souza R.C."/>
            <person name="Staats C.C."/>
            <person name="Steffens M.B.R."/>
            <person name="Teixeira S.M.R."/>
            <person name="Urmenyi T.P."/>
            <person name="Vainstein M.H."/>
            <person name="Zuccherato L.W."/>
            <person name="Simpson A.J.G."/>
            <person name="Zaha A."/>
        </authorList>
    </citation>
    <scope>NUCLEOTIDE SEQUENCE [LARGE SCALE GENOMIC DNA]</scope>
    <source>
        <strain>J / ATCC 25934 / NCTC 10110</strain>
    </source>
</reference>